<dbReference type="EC" id="3.1.11.6" evidence="1"/>
<dbReference type="EMBL" id="CP000148">
    <property type="protein sequence ID" value="ABB32165.1"/>
    <property type="molecule type" value="Genomic_DNA"/>
</dbReference>
<dbReference type="RefSeq" id="WP_004511907.1">
    <property type="nucleotide sequence ID" value="NC_007517.1"/>
</dbReference>
<dbReference type="SMR" id="Q39UA9"/>
<dbReference type="STRING" id="269799.Gmet_1936"/>
<dbReference type="KEGG" id="gme:Gmet_1936"/>
<dbReference type="eggNOG" id="COG1722">
    <property type="taxonomic scope" value="Bacteria"/>
</dbReference>
<dbReference type="HOGENOM" id="CLU_145918_3_3_7"/>
<dbReference type="Proteomes" id="UP000007073">
    <property type="component" value="Chromosome"/>
</dbReference>
<dbReference type="GO" id="GO:0005829">
    <property type="term" value="C:cytosol"/>
    <property type="evidence" value="ECO:0007669"/>
    <property type="project" value="TreeGrafter"/>
</dbReference>
<dbReference type="GO" id="GO:0009318">
    <property type="term" value="C:exodeoxyribonuclease VII complex"/>
    <property type="evidence" value="ECO:0007669"/>
    <property type="project" value="InterPro"/>
</dbReference>
<dbReference type="GO" id="GO:0008855">
    <property type="term" value="F:exodeoxyribonuclease VII activity"/>
    <property type="evidence" value="ECO:0007669"/>
    <property type="project" value="UniProtKB-UniRule"/>
</dbReference>
<dbReference type="GO" id="GO:0006308">
    <property type="term" value="P:DNA catabolic process"/>
    <property type="evidence" value="ECO:0007669"/>
    <property type="project" value="UniProtKB-UniRule"/>
</dbReference>
<dbReference type="Gene3D" id="1.10.287.1040">
    <property type="entry name" value="Exonuclease VII, small subunit"/>
    <property type="match status" value="1"/>
</dbReference>
<dbReference type="HAMAP" id="MF_00337">
    <property type="entry name" value="Exonuc_7_S"/>
    <property type="match status" value="1"/>
</dbReference>
<dbReference type="InterPro" id="IPR003761">
    <property type="entry name" value="Exonuc_VII_S"/>
</dbReference>
<dbReference type="InterPro" id="IPR037004">
    <property type="entry name" value="Exonuc_VII_ssu_sf"/>
</dbReference>
<dbReference type="NCBIfam" id="NF002140">
    <property type="entry name" value="PRK00977.1-4"/>
    <property type="match status" value="1"/>
</dbReference>
<dbReference type="NCBIfam" id="NF010669">
    <property type="entry name" value="PRK14066.1"/>
    <property type="match status" value="1"/>
</dbReference>
<dbReference type="NCBIfam" id="TIGR01280">
    <property type="entry name" value="xseB"/>
    <property type="match status" value="1"/>
</dbReference>
<dbReference type="PANTHER" id="PTHR34137">
    <property type="entry name" value="EXODEOXYRIBONUCLEASE 7 SMALL SUBUNIT"/>
    <property type="match status" value="1"/>
</dbReference>
<dbReference type="PANTHER" id="PTHR34137:SF1">
    <property type="entry name" value="EXODEOXYRIBONUCLEASE 7 SMALL SUBUNIT"/>
    <property type="match status" value="1"/>
</dbReference>
<dbReference type="Pfam" id="PF02609">
    <property type="entry name" value="Exonuc_VII_S"/>
    <property type="match status" value="1"/>
</dbReference>
<dbReference type="PIRSF" id="PIRSF006488">
    <property type="entry name" value="Exonuc_VII_S"/>
    <property type="match status" value="1"/>
</dbReference>
<dbReference type="SUPFAM" id="SSF116842">
    <property type="entry name" value="XseB-like"/>
    <property type="match status" value="1"/>
</dbReference>
<feature type="chain" id="PRO_0000303710" description="Exodeoxyribonuclease 7 small subunit">
    <location>
        <begin position="1"/>
        <end position="76"/>
    </location>
</feature>
<reference key="1">
    <citation type="journal article" date="2009" name="BMC Microbiol.">
        <title>The genome sequence of Geobacter metallireducens: features of metabolism, physiology and regulation common and dissimilar to Geobacter sulfurreducens.</title>
        <authorList>
            <person name="Aklujkar M."/>
            <person name="Krushkal J."/>
            <person name="DiBartolo G."/>
            <person name="Lapidus A."/>
            <person name="Land M.L."/>
            <person name="Lovley D.R."/>
        </authorList>
    </citation>
    <scope>NUCLEOTIDE SEQUENCE [LARGE SCALE GENOMIC DNA]</scope>
    <source>
        <strain>ATCC 53774 / DSM 7210 / GS-15</strain>
    </source>
</reference>
<protein>
    <recommendedName>
        <fullName evidence="1">Exodeoxyribonuclease 7 small subunit</fullName>
        <ecNumber evidence="1">3.1.11.6</ecNumber>
    </recommendedName>
    <alternativeName>
        <fullName evidence="1">Exodeoxyribonuclease VII small subunit</fullName>
        <shortName evidence="1">Exonuclease VII small subunit</shortName>
    </alternativeName>
</protein>
<name>EX7S_GEOMG</name>
<sequence length="76" mass="8624">MAVEKFETALKKLEDVVNRLESGELSLDDSLKAFEEGVKMAAFCTKKLDEAEKKVEILLKKKDGSFAKEPFRLEDD</sequence>
<gene>
    <name evidence="1" type="primary">xseB</name>
    <name type="ordered locus">Gmet_1936</name>
</gene>
<proteinExistence type="inferred from homology"/>
<accession>Q39UA9</accession>
<comment type="function">
    <text evidence="1">Bidirectionally degrades single-stranded DNA into large acid-insoluble oligonucleotides, which are then degraded further into small acid-soluble oligonucleotides.</text>
</comment>
<comment type="catalytic activity">
    <reaction evidence="1">
        <text>Exonucleolytic cleavage in either 5'- to 3'- or 3'- to 5'-direction to yield nucleoside 5'-phosphates.</text>
        <dbReference type="EC" id="3.1.11.6"/>
    </reaction>
</comment>
<comment type="subunit">
    <text evidence="1">Heterooligomer composed of large and small subunits.</text>
</comment>
<comment type="subcellular location">
    <subcellularLocation>
        <location evidence="1">Cytoplasm</location>
    </subcellularLocation>
</comment>
<comment type="similarity">
    <text evidence="1">Belongs to the XseB family.</text>
</comment>
<evidence type="ECO:0000255" key="1">
    <source>
        <dbReference type="HAMAP-Rule" id="MF_00337"/>
    </source>
</evidence>
<organism>
    <name type="scientific">Geobacter metallireducens (strain ATCC 53774 / DSM 7210 / GS-15)</name>
    <dbReference type="NCBI Taxonomy" id="269799"/>
    <lineage>
        <taxon>Bacteria</taxon>
        <taxon>Pseudomonadati</taxon>
        <taxon>Thermodesulfobacteriota</taxon>
        <taxon>Desulfuromonadia</taxon>
        <taxon>Geobacterales</taxon>
        <taxon>Geobacteraceae</taxon>
        <taxon>Geobacter</taxon>
    </lineage>
</organism>
<keyword id="KW-0963">Cytoplasm</keyword>
<keyword id="KW-0269">Exonuclease</keyword>
<keyword id="KW-0378">Hydrolase</keyword>
<keyword id="KW-0540">Nuclease</keyword>
<keyword id="KW-1185">Reference proteome</keyword>